<reference key="1">
    <citation type="journal article" date="2003" name="PLoS Biol.">
        <title>The genome sequence of Caenorhabditis briggsae: a platform for comparative genomics.</title>
        <authorList>
            <person name="Stein L.D."/>
            <person name="Bao Z."/>
            <person name="Blasiar D."/>
            <person name="Blumenthal T."/>
            <person name="Brent M.R."/>
            <person name="Chen N."/>
            <person name="Chinwalla A."/>
            <person name="Clarke L."/>
            <person name="Clee C."/>
            <person name="Coghlan A."/>
            <person name="Coulson A."/>
            <person name="D'Eustachio P."/>
            <person name="Fitch D.H.A."/>
            <person name="Fulton L.A."/>
            <person name="Fulton R.E."/>
            <person name="Griffiths-Jones S."/>
            <person name="Harris T.W."/>
            <person name="Hillier L.W."/>
            <person name="Kamath R."/>
            <person name="Kuwabara P.E."/>
            <person name="Mardis E.R."/>
            <person name="Marra M.A."/>
            <person name="Miner T.L."/>
            <person name="Minx P."/>
            <person name="Mullikin J.C."/>
            <person name="Plumb R.W."/>
            <person name="Rogers J."/>
            <person name="Schein J.E."/>
            <person name="Sohrmann M."/>
            <person name="Spieth J."/>
            <person name="Stajich J.E."/>
            <person name="Wei C."/>
            <person name="Willey D."/>
            <person name="Wilson R.K."/>
            <person name="Durbin R.M."/>
            <person name="Waterston R.H."/>
        </authorList>
    </citation>
    <scope>NUCLEOTIDE SEQUENCE [LARGE SCALE GENOMIC DNA]</scope>
    <source>
        <strain>AF16</strain>
    </source>
</reference>
<accession>A8XEA2</accession>
<proteinExistence type="inferred from homology"/>
<organism>
    <name type="scientific">Caenorhabditis briggsae</name>
    <dbReference type="NCBI Taxonomy" id="6238"/>
    <lineage>
        <taxon>Eukaryota</taxon>
        <taxon>Metazoa</taxon>
        <taxon>Ecdysozoa</taxon>
        <taxon>Nematoda</taxon>
        <taxon>Chromadorea</taxon>
        <taxon>Rhabditida</taxon>
        <taxon>Rhabditina</taxon>
        <taxon>Rhabditomorpha</taxon>
        <taxon>Rhabditoidea</taxon>
        <taxon>Rhabditidae</taxon>
        <taxon>Peloderinae</taxon>
        <taxon>Caenorhabditis</taxon>
    </lineage>
</organism>
<evidence type="ECO:0000250" key="1"/>
<evidence type="ECO:0000255" key="2">
    <source>
        <dbReference type="PROSITE-ProRule" id="PRU00538"/>
    </source>
</evidence>
<evidence type="ECO:0000256" key="3">
    <source>
        <dbReference type="SAM" id="MobiDB-lite"/>
    </source>
</evidence>
<evidence type="ECO:0000305" key="4"/>
<feature type="chain" id="PRO_0000390980" description="Bifunctional lysine-specific demethylase and histidyl-hydroxylase NO66">
    <location>
        <begin position="1"/>
        <end position="776"/>
    </location>
</feature>
<feature type="domain" description="JmjC" evidence="2">
    <location>
        <begin position="425"/>
        <end position="569"/>
    </location>
</feature>
<feature type="region of interest" description="Disordered" evidence="3">
    <location>
        <begin position="1"/>
        <end position="57"/>
    </location>
</feature>
<feature type="region of interest" description="Disordered" evidence="3">
    <location>
        <begin position="87"/>
        <end position="126"/>
    </location>
</feature>
<feature type="region of interest" description="Disordered" evidence="3">
    <location>
        <begin position="165"/>
        <end position="288"/>
    </location>
</feature>
<feature type="compositionally biased region" description="Basic and acidic residues" evidence="3">
    <location>
        <begin position="47"/>
        <end position="57"/>
    </location>
</feature>
<feature type="compositionally biased region" description="Basic and acidic residues" evidence="3">
    <location>
        <begin position="98"/>
        <end position="119"/>
    </location>
</feature>
<feature type="compositionally biased region" description="Acidic residues" evidence="3">
    <location>
        <begin position="166"/>
        <end position="204"/>
    </location>
</feature>
<feature type="compositionally biased region" description="Basic and acidic residues" evidence="3">
    <location>
        <begin position="206"/>
        <end position="216"/>
    </location>
</feature>
<feature type="compositionally biased region" description="Acidic residues" evidence="3">
    <location>
        <begin position="217"/>
        <end position="288"/>
    </location>
</feature>
<feature type="binding site" evidence="2">
    <location>
        <position position="468"/>
    </location>
    <ligand>
        <name>Fe cation</name>
        <dbReference type="ChEBI" id="CHEBI:24875"/>
        <note>catalytic</note>
    </ligand>
</feature>
<feature type="binding site" evidence="2">
    <location>
        <position position="470"/>
    </location>
    <ligand>
        <name>Fe cation</name>
        <dbReference type="ChEBI" id="CHEBI:24875"/>
        <note>catalytic</note>
    </ligand>
</feature>
<feature type="binding site" evidence="2">
    <location>
        <position position="535"/>
    </location>
    <ligand>
        <name>Fe cation</name>
        <dbReference type="ChEBI" id="CHEBI:24875"/>
        <note>catalytic</note>
    </ligand>
</feature>
<keyword id="KW-0156">Chromatin regulator</keyword>
<keyword id="KW-0223">Dioxygenase</keyword>
<keyword id="KW-0408">Iron</keyword>
<keyword id="KW-0479">Metal-binding</keyword>
<keyword id="KW-0539">Nucleus</keyword>
<keyword id="KW-0560">Oxidoreductase</keyword>
<keyword id="KW-1185">Reference proteome</keyword>
<keyword id="KW-0678">Repressor</keyword>
<keyword id="KW-0804">Transcription</keyword>
<keyword id="KW-0805">Transcription regulation</keyword>
<comment type="function">
    <text evidence="1">Oxygenase that can act as both a histone lysine demethylase and a ribosomal histidine hydroxylase. Specifically demethylates 'Lys-4' (H3K4me) and 'Lys-36' (H3K36me) of histone H3, thereby playing a central role in histone code (By similarity).</text>
</comment>
<comment type="catalytic activity">
    <reaction>
        <text>N(6),N(6)-dimethyl-L-lysyl(36)-[histone H3] + 2 2-oxoglutarate + 2 O2 = L-lysyl(36)-[histone H3] + 2 formaldehyde + 2 succinate + 2 CO2</text>
        <dbReference type="Rhea" id="RHEA:42032"/>
        <dbReference type="Rhea" id="RHEA-COMP:9785"/>
        <dbReference type="Rhea" id="RHEA-COMP:9787"/>
        <dbReference type="ChEBI" id="CHEBI:15379"/>
        <dbReference type="ChEBI" id="CHEBI:16526"/>
        <dbReference type="ChEBI" id="CHEBI:16810"/>
        <dbReference type="ChEBI" id="CHEBI:16842"/>
        <dbReference type="ChEBI" id="CHEBI:29969"/>
        <dbReference type="ChEBI" id="CHEBI:30031"/>
        <dbReference type="ChEBI" id="CHEBI:61976"/>
        <dbReference type="EC" id="1.14.11.27"/>
    </reaction>
</comment>
<comment type="cofactor">
    <cofactor evidence="1">
        <name>Fe(2+)</name>
        <dbReference type="ChEBI" id="CHEBI:29033"/>
    </cofactor>
    <text evidence="1">Binds 1 Fe(2+) ion per subunit.</text>
</comment>
<comment type="subcellular location">
    <subcellularLocation>
        <location evidence="1">Nucleus</location>
    </subcellularLocation>
</comment>
<comment type="similarity">
    <text evidence="4">Belongs to the ROX family. NO66 subfamily.</text>
</comment>
<sequence length="776" mass="88985">MGKKNKSNGGGNTNNTPTKTPSKPPVKFNDKWASIENGEAKSASVSHYKEPSKEPKFVHPAKLAKEKKIFDGLDIPERVLAHGKVVEQNGGKKRRHREISPKMEAKKPKVESKSKDGVAAKKAHKHFTVSSEVVQSTYFFEEPDNGNEVTLVSNGKETTIEKTVILDEEVEDEEIDEEEFEDEEEVEDEEGMDEDETEIDESEMIVDPKDIERCIEFEDVDDEDEMEDEEEFEDEEEVEDEEVDDEEEEEVADEERGEEQEDEQEEEEEVSDEESVVSEMDADSDDEGFIAGKDREAHVISKDKAARTFAAKPVDFDAFPFNDQDSVVTASRAFGFMVSPCDVQTFFDKFYQSNVLVVHRKTPAYYGNLFSTTRFSELLEKHYLEYNMNINIAQYKDGIRTTLNGKGRVYPQIVKQHLHNLCSVQLVNPQTFDDRIWYLCEILQEQFGCFVGANTYLTPAGSSGFAPHWDEIDAFLLQVEGRKYWRVWAPESAEEELPLESSGNFTEDDMKGKEPVFEGWIEQGDMIYIPRGYTHQARTDKKVHSLHVTVSTGRQWSFANLMEKVIPEAVGALTEERHKLRRGLPIGLFDMGGVVDLDYSQEEHFTEKFKIVVDRHMSRLRNLVADHLLDSSVDSMTKEFMKQALPPILTDKEKKRSVIGLSTNLLGDDLIDFCANTKVKFIRKHTQRLLMESEDSCFISHRMNNSRLFEGRPETLVDFPSTGIDTYRVLWNAYPEWRTLDEIFSCRETKSNTRKEKLAAIQILFQMGVLLVKNPK</sequence>
<name>NO66_CAEBR</name>
<dbReference type="EC" id="1.14.11.-"/>
<dbReference type="EC" id="1.14.11.27"/>
<dbReference type="EMBL" id="HE601540">
    <property type="protein sequence ID" value="CAP31037.1"/>
    <property type="molecule type" value="Genomic_DNA"/>
</dbReference>
<dbReference type="SMR" id="A8XEA2"/>
<dbReference type="FunCoup" id="A8XEA2">
    <property type="interactions" value="2322"/>
</dbReference>
<dbReference type="STRING" id="6238.A8XEA2"/>
<dbReference type="EnsemblMetazoa" id="CBG11988.1">
    <property type="protein sequence ID" value="CBG11988.1"/>
    <property type="gene ID" value="WBGene00033005"/>
</dbReference>
<dbReference type="KEGG" id="cbr:CBG_11988"/>
<dbReference type="CTD" id="8588280"/>
<dbReference type="WormBase" id="CBG11988">
    <property type="protein sequence ID" value="CBP09009"/>
    <property type="gene ID" value="WBGene00033005"/>
    <property type="gene designation" value="Cbr-jmjc-1"/>
</dbReference>
<dbReference type="eggNOG" id="KOG3706">
    <property type="taxonomic scope" value="Eukaryota"/>
</dbReference>
<dbReference type="HOGENOM" id="CLU_013645_4_0_1"/>
<dbReference type="InParanoid" id="A8XEA2"/>
<dbReference type="OMA" id="PVFEGWI"/>
<dbReference type="Proteomes" id="UP000008549">
    <property type="component" value="Unassembled WGS sequence"/>
</dbReference>
<dbReference type="GO" id="GO:0005730">
    <property type="term" value="C:nucleolus"/>
    <property type="evidence" value="ECO:0000318"/>
    <property type="project" value="GO_Central"/>
</dbReference>
<dbReference type="GO" id="GO:0005634">
    <property type="term" value="C:nucleus"/>
    <property type="evidence" value="ECO:0000250"/>
    <property type="project" value="UniProtKB"/>
</dbReference>
<dbReference type="GO" id="GO:0016706">
    <property type="term" value="F:2-oxoglutarate-dependent dioxygenase activity"/>
    <property type="evidence" value="ECO:0000250"/>
    <property type="project" value="UniProtKB"/>
</dbReference>
<dbReference type="GO" id="GO:0051864">
    <property type="term" value="F:histone H3K36 demethylase activity"/>
    <property type="evidence" value="ECO:0000250"/>
    <property type="project" value="UniProtKB"/>
</dbReference>
<dbReference type="GO" id="GO:0140680">
    <property type="term" value="F:histone H3K36me/H3K36me2 demethylase activity"/>
    <property type="evidence" value="ECO:0007669"/>
    <property type="project" value="UniProtKB-EC"/>
</dbReference>
<dbReference type="GO" id="GO:0032453">
    <property type="term" value="F:histone H3K4 demethylase activity"/>
    <property type="evidence" value="ECO:0000318"/>
    <property type="project" value="GO_Central"/>
</dbReference>
<dbReference type="GO" id="GO:0034647">
    <property type="term" value="F:histone H3K4me/H3K4me2/H3K4me3 demethylase activity"/>
    <property type="evidence" value="ECO:0000250"/>
    <property type="project" value="UniProtKB"/>
</dbReference>
<dbReference type="GO" id="GO:0005506">
    <property type="term" value="F:iron ion binding"/>
    <property type="evidence" value="ECO:0000250"/>
    <property type="project" value="UniProtKB"/>
</dbReference>
<dbReference type="GO" id="GO:0045892">
    <property type="term" value="P:negative regulation of DNA-templated transcription"/>
    <property type="evidence" value="ECO:0000250"/>
    <property type="project" value="UniProtKB"/>
</dbReference>
<dbReference type="GO" id="GO:0045471">
    <property type="term" value="P:response to ethanol"/>
    <property type="evidence" value="ECO:0007669"/>
    <property type="project" value="EnsemblMetazoa"/>
</dbReference>
<dbReference type="GO" id="GO:0009408">
    <property type="term" value="P:response to heat"/>
    <property type="evidence" value="ECO:0007669"/>
    <property type="project" value="EnsemblMetazoa"/>
</dbReference>
<dbReference type="GO" id="GO:0006970">
    <property type="term" value="P:response to osmotic stress"/>
    <property type="evidence" value="ECO:0007669"/>
    <property type="project" value="EnsemblMetazoa"/>
</dbReference>
<dbReference type="GO" id="GO:0006979">
    <property type="term" value="P:response to oxidative stress"/>
    <property type="evidence" value="ECO:0007669"/>
    <property type="project" value="EnsemblMetazoa"/>
</dbReference>
<dbReference type="FunFam" id="2.60.120.650:FF:000013">
    <property type="entry name" value="Ribosomal oxygenase 1"/>
    <property type="match status" value="1"/>
</dbReference>
<dbReference type="FunFam" id="1.10.10.1500:FF:000001">
    <property type="entry name" value="ribosomal oxygenase 1 isoform X1"/>
    <property type="match status" value="1"/>
</dbReference>
<dbReference type="FunFam" id="3.90.930.40:FF:000001">
    <property type="entry name" value="ribosomal oxygenase 1 isoform X1"/>
    <property type="match status" value="1"/>
</dbReference>
<dbReference type="Gene3D" id="3.90.930.40">
    <property type="match status" value="1"/>
</dbReference>
<dbReference type="Gene3D" id="2.60.120.650">
    <property type="entry name" value="Cupin"/>
    <property type="match status" value="1"/>
</dbReference>
<dbReference type="Gene3D" id="1.10.10.1500">
    <property type="entry name" value="JmjC domain-containing ribosomal oxygenase (ROX), dimer domain"/>
    <property type="match status" value="1"/>
</dbReference>
<dbReference type="InterPro" id="IPR003347">
    <property type="entry name" value="JmjC_dom"/>
</dbReference>
<dbReference type="InterPro" id="IPR039994">
    <property type="entry name" value="NO66-like"/>
</dbReference>
<dbReference type="InterPro" id="IPR049043">
    <property type="entry name" value="RIOX1/NO66-like_C_WH"/>
</dbReference>
<dbReference type="PANTHER" id="PTHR13096">
    <property type="entry name" value="MINA53 MYC INDUCED NUCLEAR ANTIGEN"/>
    <property type="match status" value="1"/>
</dbReference>
<dbReference type="PANTHER" id="PTHR13096:SF8">
    <property type="entry name" value="RIBOSOMAL OXYGENASE 1"/>
    <property type="match status" value="1"/>
</dbReference>
<dbReference type="Pfam" id="PF08007">
    <property type="entry name" value="JmjC_2"/>
    <property type="match status" value="1"/>
</dbReference>
<dbReference type="Pfam" id="PF21233">
    <property type="entry name" value="RIOX1_C_WH"/>
    <property type="match status" value="1"/>
</dbReference>
<dbReference type="SUPFAM" id="SSF51197">
    <property type="entry name" value="Clavaminate synthase-like"/>
    <property type="match status" value="1"/>
</dbReference>
<dbReference type="PROSITE" id="PS51184">
    <property type="entry name" value="JMJC"/>
    <property type="match status" value="1"/>
</dbReference>
<protein>
    <recommendedName>
        <fullName>Bifunctional lysine-specific demethylase and histidyl-hydroxylase NO66</fullName>
        <ecNumber>1.14.11.-</ecNumber>
        <ecNumber>1.14.11.27</ecNumber>
    </recommendedName>
    <alternativeName>
        <fullName>Histone lysine demethylase NO66</fullName>
    </alternativeName>
    <alternativeName>
        <fullName>Jumanjic domain protein 1</fullName>
    </alternativeName>
</protein>
<gene>
    <name type="primary">jmjc-1</name>
    <name type="ORF">CBG11988</name>
</gene>